<comment type="function">
    <text>Proteoglycan that seems to be implicated in diverse developmental roles such as differentiation, cell-cell recognition, embryogenesis and programmed cell death.</text>
</comment>
<comment type="subcellular location">
    <subcellularLocation>
        <location evidence="5">Cell membrane</location>
        <topology evidence="5">Lipid-anchor</topology>
        <topology evidence="5">GPI-anchor</topology>
    </subcellularLocation>
</comment>
<comment type="tissue specificity">
    <text evidence="4">Predominantly expressed in flowers and at a lower level in roots and leaves.</text>
</comment>
<comment type="PTM">
    <text evidence="1">O-glycosylated on the hydroxyproline residues.</text>
</comment>
<comment type="similarity">
    <text evidence="5">Belongs to the classical AGP family.</text>
</comment>
<name>AGP1_ARATH</name>
<gene>
    <name type="primary">AGP1</name>
    <name type="ordered locus">At5g64310</name>
    <name type="ORF">MSJ1.15</name>
</gene>
<proteinExistence type="evidence at transcript level"/>
<keyword id="KW-1003">Cell membrane</keyword>
<keyword id="KW-0325">Glycoprotein</keyword>
<keyword id="KW-0336">GPI-anchor</keyword>
<keyword id="KW-0449">Lipoprotein</keyword>
<keyword id="KW-0472">Membrane</keyword>
<keyword id="KW-0654">Proteoglycan</keyword>
<keyword id="KW-1185">Reference proteome</keyword>
<keyword id="KW-0732">Signal</keyword>
<organism>
    <name type="scientific">Arabidopsis thaliana</name>
    <name type="common">Mouse-ear cress</name>
    <dbReference type="NCBI Taxonomy" id="3702"/>
    <lineage>
        <taxon>Eukaryota</taxon>
        <taxon>Viridiplantae</taxon>
        <taxon>Streptophyta</taxon>
        <taxon>Embryophyta</taxon>
        <taxon>Tracheophyta</taxon>
        <taxon>Spermatophyta</taxon>
        <taxon>Magnoliopsida</taxon>
        <taxon>eudicotyledons</taxon>
        <taxon>Gunneridae</taxon>
        <taxon>Pentapetalae</taxon>
        <taxon>rosids</taxon>
        <taxon>malvids</taxon>
        <taxon>Brassicales</taxon>
        <taxon>Brassicaceae</taxon>
        <taxon>Camelineae</taxon>
        <taxon>Arabidopsis</taxon>
    </lineage>
</organism>
<sequence>MAFSKSLVFVLLAALLISSAVAQSPAPAPSNVGGRRISPAPSPKKMTAPAPAPEVSPSPSPAAALTPESSASPPSPPLADSPTADSPALSPSAISDSPTEAPGPAQGGAVSNKFASFGSVAVMLTAAVLVI</sequence>
<protein>
    <recommendedName>
        <fullName>Classical arabinogalactan protein 1</fullName>
    </recommendedName>
</protein>
<accession>Q8LCN5</accession>
<accession>Q94A23</accession>
<accession>Q9ZT19</accession>
<dbReference type="EMBL" id="AF082298">
    <property type="protein sequence ID" value="AAC77823.1"/>
    <property type="molecule type" value="mRNA"/>
</dbReference>
<dbReference type="EMBL" id="AB008268">
    <property type="protein sequence ID" value="BAB09862.1"/>
    <property type="molecule type" value="Genomic_DNA"/>
</dbReference>
<dbReference type="EMBL" id="CP002688">
    <property type="protein sequence ID" value="AED97868.1"/>
    <property type="molecule type" value="Genomic_DNA"/>
</dbReference>
<dbReference type="EMBL" id="AY050438">
    <property type="protein sequence ID" value="AAK91454.1"/>
    <property type="molecule type" value="mRNA"/>
</dbReference>
<dbReference type="EMBL" id="AY093798">
    <property type="protein sequence ID" value="AAM10414.1"/>
    <property type="molecule type" value="mRNA"/>
</dbReference>
<dbReference type="EMBL" id="AY086494">
    <property type="protein sequence ID" value="AAM63495.1"/>
    <property type="molecule type" value="mRNA"/>
</dbReference>
<dbReference type="RefSeq" id="NP_201236.1">
    <property type="nucleotide sequence ID" value="NM_125827.3"/>
</dbReference>
<dbReference type="STRING" id="3702.Q8LCN5"/>
<dbReference type="iPTMnet" id="Q8LCN5"/>
<dbReference type="PaxDb" id="3702-AT5G64310.1"/>
<dbReference type="EnsemblPlants" id="AT5G64310.1">
    <property type="protein sequence ID" value="AT5G64310.1"/>
    <property type="gene ID" value="AT5G64310"/>
</dbReference>
<dbReference type="GeneID" id="836552"/>
<dbReference type="Gramene" id="AT5G64310.1">
    <property type="protein sequence ID" value="AT5G64310.1"/>
    <property type="gene ID" value="AT5G64310"/>
</dbReference>
<dbReference type="KEGG" id="ath:AT5G64310"/>
<dbReference type="Araport" id="AT5G64310"/>
<dbReference type="TAIR" id="AT5G64310">
    <property type="gene designation" value="AGP1"/>
</dbReference>
<dbReference type="eggNOG" id="ENOG502S8AB">
    <property type="taxonomic scope" value="Eukaryota"/>
</dbReference>
<dbReference type="HOGENOM" id="CLU_1941037_0_0_1"/>
<dbReference type="InParanoid" id="Q8LCN5"/>
<dbReference type="OMA" id="GHTMAQS"/>
<dbReference type="PRO" id="PR:Q8LCN5"/>
<dbReference type="Proteomes" id="UP000006548">
    <property type="component" value="Chromosome 5"/>
</dbReference>
<dbReference type="ExpressionAtlas" id="Q8LCN5">
    <property type="expression patterns" value="baseline and differential"/>
</dbReference>
<dbReference type="GO" id="GO:0005886">
    <property type="term" value="C:plasma membrane"/>
    <property type="evidence" value="ECO:0007669"/>
    <property type="project" value="UniProtKB-SubCell"/>
</dbReference>
<dbReference type="GO" id="GO:0098552">
    <property type="term" value="C:side of membrane"/>
    <property type="evidence" value="ECO:0007669"/>
    <property type="project" value="UniProtKB-KW"/>
</dbReference>
<dbReference type="InterPro" id="IPR044959">
    <property type="entry name" value="AGP"/>
</dbReference>
<dbReference type="PANTHER" id="PTHR36321:SF2">
    <property type="entry name" value="CLASSICAL ARABINOGALACTAN PROTEIN 1"/>
    <property type="match status" value="1"/>
</dbReference>
<dbReference type="PANTHER" id="PTHR36321">
    <property type="entry name" value="CLASSICAL ARABINOGALACTAN PROTEIN 9"/>
    <property type="match status" value="1"/>
</dbReference>
<feature type="signal peptide" evidence="2">
    <location>
        <begin position="1"/>
        <end position="22"/>
    </location>
</feature>
<feature type="chain" id="PRO_0000268985" description="Classical arabinogalactan protein 1">
    <location>
        <begin position="23"/>
        <end position="108"/>
    </location>
</feature>
<feature type="propeptide" id="PRO_0000268986" description="Removed in mature form" evidence="2">
    <location>
        <begin position="109"/>
        <end position="131"/>
    </location>
</feature>
<feature type="region of interest" description="Disordered" evidence="3">
    <location>
        <begin position="22"/>
        <end position="110"/>
    </location>
</feature>
<feature type="compositionally biased region" description="Pro residues" evidence="3">
    <location>
        <begin position="50"/>
        <end position="60"/>
    </location>
</feature>
<feature type="compositionally biased region" description="Low complexity" evidence="3">
    <location>
        <begin position="61"/>
        <end position="72"/>
    </location>
</feature>
<feature type="lipid moiety-binding region" description="GPI-anchor amidated glycine" evidence="2">
    <location>
        <position position="108"/>
    </location>
</feature>
<feature type="sequence conflict" description="In Ref. 5; AAM63495." evidence="5" ref="5">
    <original>A</original>
    <variation>P</variation>
    <location>
        <position position="13"/>
    </location>
</feature>
<feature type="sequence conflict" description="In Ref. 4; AAM10414/AAK91454." evidence="5" ref="4">
    <original>P</original>
    <variation>T</variation>
    <location>
        <position position="87"/>
    </location>
</feature>
<evidence type="ECO:0000250" key="1"/>
<evidence type="ECO:0000255" key="2"/>
<evidence type="ECO:0000256" key="3">
    <source>
        <dbReference type="SAM" id="MobiDB-lite"/>
    </source>
</evidence>
<evidence type="ECO:0000269" key="4">
    <source>
    </source>
</evidence>
<evidence type="ECO:0000305" key="5"/>
<reference key="1">
    <citation type="journal article" date="1998" name="Trends Plant Sci.">
        <title>GPI-anchors on arabinogalactan-proteins: implications for signalling in plants.</title>
        <authorList>
            <person name="Schultz C.J."/>
            <person name="Gilson P.R."/>
            <person name="Oxley D."/>
            <person name="Youl J.J."/>
            <person name="Bacic A."/>
        </authorList>
    </citation>
    <scope>NUCLEOTIDE SEQUENCE [MRNA]</scope>
    <source>
        <strain>cv. Columbia</strain>
    </source>
</reference>
<reference key="2">
    <citation type="journal article" date="1997" name="DNA Res.">
        <title>Structural analysis of Arabidopsis thaliana chromosome 5. III. Sequence features of the regions of 1,191,918 bp covered by seventeen physically assigned P1 clones.</title>
        <authorList>
            <person name="Nakamura Y."/>
            <person name="Sato S."/>
            <person name="Kaneko T."/>
            <person name="Kotani H."/>
            <person name="Asamizu E."/>
            <person name="Miyajima N."/>
            <person name="Tabata S."/>
        </authorList>
    </citation>
    <scope>NUCLEOTIDE SEQUENCE [LARGE SCALE GENOMIC DNA]</scope>
    <source>
        <strain>cv. Columbia</strain>
    </source>
</reference>
<reference key="3">
    <citation type="journal article" date="2017" name="Plant J.">
        <title>Araport11: a complete reannotation of the Arabidopsis thaliana reference genome.</title>
        <authorList>
            <person name="Cheng C.Y."/>
            <person name="Krishnakumar V."/>
            <person name="Chan A.P."/>
            <person name="Thibaud-Nissen F."/>
            <person name="Schobel S."/>
            <person name="Town C.D."/>
        </authorList>
    </citation>
    <scope>GENOME REANNOTATION</scope>
    <source>
        <strain>cv. Columbia</strain>
    </source>
</reference>
<reference key="4">
    <citation type="journal article" date="2003" name="Science">
        <title>Empirical analysis of transcriptional activity in the Arabidopsis genome.</title>
        <authorList>
            <person name="Yamada K."/>
            <person name="Lim J."/>
            <person name="Dale J.M."/>
            <person name="Chen H."/>
            <person name="Shinn P."/>
            <person name="Palm C.J."/>
            <person name="Southwick A.M."/>
            <person name="Wu H.C."/>
            <person name="Kim C.J."/>
            <person name="Nguyen M."/>
            <person name="Pham P.K."/>
            <person name="Cheuk R.F."/>
            <person name="Karlin-Newmann G."/>
            <person name="Liu S.X."/>
            <person name="Lam B."/>
            <person name="Sakano H."/>
            <person name="Wu T."/>
            <person name="Yu G."/>
            <person name="Miranda M."/>
            <person name="Quach H.L."/>
            <person name="Tripp M."/>
            <person name="Chang C.H."/>
            <person name="Lee J.M."/>
            <person name="Toriumi M.J."/>
            <person name="Chan M.M."/>
            <person name="Tang C.C."/>
            <person name="Onodera C.S."/>
            <person name="Deng J.M."/>
            <person name="Akiyama K."/>
            <person name="Ansari Y."/>
            <person name="Arakawa T."/>
            <person name="Banh J."/>
            <person name="Banno F."/>
            <person name="Bowser L."/>
            <person name="Brooks S.Y."/>
            <person name="Carninci P."/>
            <person name="Chao Q."/>
            <person name="Choy N."/>
            <person name="Enju A."/>
            <person name="Goldsmith A.D."/>
            <person name="Gurjal M."/>
            <person name="Hansen N.F."/>
            <person name="Hayashizaki Y."/>
            <person name="Johnson-Hopson C."/>
            <person name="Hsuan V.W."/>
            <person name="Iida K."/>
            <person name="Karnes M."/>
            <person name="Khan S."/>
            <person name="Koesema E."/>
            <person name="Ishida J."/>
            <person name="Jiang P.X."/>
            <person name="Jones T."/>
            <person name="Kawai J."/>
            <person name="Kamiya A."/>
            <person name="Meyers C."/>
            <person name="Nakajima M."/>
            <person name="Narusaka M."/>
            <person name="Seki M."/>
            <person name="Sakurai T."/>
            <person name="Satou M."/>
            <person name="Tamse R."/>
            <person name="Vaysberg M."/>
            <person name="Wallender E.K."/>
            <person name="Wong C."/>
            <person name="Yamamura Y."/>
            <person name="Yuan S."/>
            <person name="Shinozaki K."/>
            <person name="Davis R.W."/>
            <person name="Theologis A."/>
            <person name="Ecker J.R."/>
        </authorList>
    </citation>
    <scope>NUCLEOTIDE SEQUENCE [LARGE SCALE MRNA]</scope>
    <source>
        <strain>cv. Columbia</strain>
    </source>
</reference>
<reference key="5">
    <citation type="submission" date="2002-03" db="EMBL/GenBank/DDBJ databases">
        <title>Full-length cDNA from Arabidopsis thaliana.</title>
        <authorList>
            <person name="Brover V.V."/>
            <person name="Troukhan M.E."/>
            <person name="Alexandrov N.A."/>
            <person name="Lu Y.-P."/>
            <person name="Flavell R.B."/>
            <person name="Feldmann K.A."/>
        </authorList>
    </citation>
    <scope>NUCLEOTIDE SEQUENCE [LARGE SCALE MRNA]</scope>
</reference>
<reference key="6">
    <citation type="journal article" date="2000" name="Plant Cell">
        <title>The classical arabinogalactan protein gene family of Arabidopsis.</title>
        <authorList>
            <person name="Schultz C.J."/>
            <person name="Johnson K.L."/>
            <person name="Currie G."/>
            <person name="Bacic A."/>
        </authorList>
    </citation>
    <scope>TISSUE SPECIFICITY</scope>
</reference>
<reference key="7">
    <citation type="journal article" date="2002" name="Plant Physiol.">
        <title>Using genomic resources to guide research directions. The arabinogalactan protein gene family as a test case.</title>
        <authorList>
            <person name="Schultz C.J."/>
            <person name="Rumsewicz M.P."/>
            <person name="Johnson K.L."/>
            <person name="Jones B.J."/>
            <person name="Gaspar Y.M."/>
            <person name="Bacic A."/>
        </authorList>
    </citation>
    <scope>GENE FAMILY</scope>
    <scope>NOMENCLATURE</scope>
</reference>